<reference key="1">
    <citation type="journal article" date="2006" name="BMC Evol. Biol.">
        <title>Phylogenetic analyses of Vitis (Vitaceae) based on complete chloroplast genome sequences: effects of taxon sampling and phylogenetic methods on resolving relationships among rosids.</title>
        <authorList>
            <person name="Jansen R.K."/>
            <person name="Kaittanis C."/>
            <person name="Lee S.-B."/>
            <person name="Saski C."/>
            <person name="Tomkins J."/>
            <person name="Alverson A.J."/>
            <person name="Daniell H."/>
        </authorList>
    </citation>
    <scope>NUCLEOTIDE SEQUENCE [LARGE SCALE GENOMIC DNA]</scope>
    <source>
        <strain>cv. Maxxa</strain>
    </source>
</reference>
<reference key="2">
    <citation type="journal article" date="2007" name="Nature">
        <title>The grapevine genome sequence suggests ancestral hexaploidization in major angiosperm phyla.</title>
        <authorList>
            <person name="Jaillon O."/>
            <person name="Aury J.-M."/>
            <person name="Noel B."/>
            <person name="Policriti A."/>
            <person name="Clepet C."/>
            <person name="Casagrande A."/>
            <person name="Choisne N."/>
            <person name="Aubourg S."/>
            <person name="Vitulo N."/>
            <person name="Jubin C."/>
            <person name="Vezzi A."/>
            <person name="Legeai F."/>
            <person name="Hugueney P."/>
            <person name="Dasilva C."/>
            <person name="Horner D."/>
            <person name="Mica E."/>
            <person name="Jublot D."/>
            <person name="Poulain J."/>
            <person name="Bruyere C."/>
            <person name="Billault A."/>
            <person name="Segurens B."/>
            <person name="Gouyvenoux M."/>
            <person name="Ugarte E."/>
            <person name="Cattonaro F."/>
            <person name="Anthouard V."/>
            <person name="Vico V."/>
            <person name="Del Fabbro C."/>
            <person name="Alaux M."/>
            <person name="Di Gaspero G."/>
            <person name="Dumas V."/>
            <person name="Felice N."/>
            <person name="Paillard S."/>
            <person name="Juman I."/>
            <person name="Moroldo M."/>
            <person name="Scalabrin S."/>
            <person name="Canaguier A."/>
            <person name="Le Clainche I."/>
            <person name="Malacrida G."/>
            <person name="Durand E."/>
            <person name="Pesole G."/>
            <person name="Laucou V."/>
            <person name="Chatelet P."/>
            <person name="Merdinoglu D."/>
            <person name="Delledonne M."/>
            <person name="Pezzotti M."/>
            <person name="Lecharny A."/>
            <person name="Scarpelli C."/>
            <person name="Artiguenave F."/>
            <person name="Pe M.E."/>
            <person name="Valle G."/>
            <person name="Morgante M."/>
            <person name="Caboche M."/>
            <person name="Adam-Blondon A.-F."/>
            <person name="Weissenbach J."/>
            <person name="Quetier F."/>
            <person name="Wincker P."/>
        </authorList>
    </citation>
    <scope>NUCLEOTIDE SEQUENCE [LARGE SCALE GENOMIC DNA]</scope>
    <source>
        <strain>cv. Pinot noir / PN40024</strain>
    </source>
</reference>
<name>ATPI_VITVI</name>
<evidence type="ECO:0000255" key="1">
    <source>
        <dbReference type="HAMAP-Rule" id="MF_01393"/>
    </source>
</evidence>
<sequence length="247" mass="27087">MNVLSCSINTLKGLYDISGVEVGQHFYWQIGGFQVHAQVLITSWVVIAILLGSATLAVRNPQTIPTDGQNFFEYVLEFIRDVSKTQIGEEYGSWVPFIGTMFLFIFVSNWSGALLPWKIIQLPHGELAAPTNDINTTVALALLTSVAYFYAGLTKKGLGYFGKYIQPTPILLPINILEDFTKPLSLSFRLFGNILADELVVVVLVSLVPSIVPIPVMFLGLFTSGIQALIFATLAAAYIGESMEGHH</sequence>
<gene>
    <name evidence="1" type="primary">atpI</name>
    <name type="ORF">GSVIVT00013243001</name>
    <name type="ORF">LOC100246719</name>
    <name type="ORF">VIVICP009</name>
</gene>
<proteinExistence type="inferred from homology"/>
<organism>
    <name type="scientific">Vitis vinifera</name>
    <name type="common">Grape</name>
    <dbReference type="NCBI Taxonomy" id="29760"/>
    <lineage>
        <taxon>Eukaryota</taxon>
        <taxon>Viridiplantae</taxon>
        <taxon>Streptophyta</taxon>
        <taxon>Embryophyta</taxon>
        <taxon>Tracheophyta</taxon>
        <taxon>Spermatophyta</taxon>
        <taxon>Magnoliopsida</taxon>
        <taxon>eudicotyledons</taxon>
        <taxon>Gunneridae</taxon>
        <taxon>Pentapetalae</taxon>
        <taxon>rosids</taxon>
        <taxon>Vitales</taxon>
        <taxon>Vitaceae</taxon>
        <taxon>Viteae</taxon>
        <taxon>Vitis</taxon>
    </lineage>
</organism>
<comment type="function">
    <text evidence="1">Key component of the proton channel; it plays a direct role in the translocation of protons across the membrane.</text>
</comment>
<comment type="subunit">
    <text evidence="1">F-type ATPases have 2 components, CF(1) - the catalytic core - and CF(0) - the membrane proton channel. CF(1) has five subunits: alpha(3), beta(3), gamma(1), delta(1), epsilon(1). CF(0) has four main subunits: a, b, b' and c.</text>
</comment>
<comment type="subcellular location">
    <subcellularLocation>
        <location evidence="1">Plastid</location>
        <location evidence="1">Chloroplast thylakoid membrane</location>
        <topology evidence="1">Multi-pass membrane protein</topology>
    </subcellularLocation>
</comment>
<comment type="similarity">
    <text evidence="1">Belongs to the ATPase A chain family.</text>
</comment>
<accession>Q0ZJ32</accession>
<geneLocation type="chloroplast"/>
<feature type="chain" id="PRO_0000362604" description="ATP synthase subunit a, chloroplastic">
    <location>
        <begin position="1"/>
        <end position="247"/>
    </location>
</feature>
<feature type="transmembrane region" description="Helical" evidence="1">
    <location>
        <begin position="38"/>
        <end position="58"/>
    </location>
</feature>
<feature type="transmembrane region" description="Helical" evidence="1">
    <location>
        <begin position="95"/>
        <end position="115"/>
    </location>
</feature>
<feature type="transmembrane region" description="Helical" evidence="1">
    <location>
        <begin position="134"/>
        <end position="154"/>
    </location>
</feature>
<feature type="transmembrane region" description="Helical" evidence="1">
    <location>
        <begin position="199"/>
        <end position="219"/>
    </location>
</feature>
<feature type="transmembrane region" description="Helical" evidence="1">
    <location>
        <begin position="220"/>
        <end position="240"/>
    </location>
</feature>
<dbReference type="EMBL" id="DQ424856">
    <property type="protein sequence ID" value="ABE47522.1"/>
    <property type="molecule type" value="Genomic_DNA"/>
</dbReference>
<dbReference type="RefSeq" id="YP_567064.1">
    <property type="nucleotide sequence ID" value="NC_007957.1"/>
</dbReference>
<dbReference type="SMR" id="Q0ZJ32"/>
<dbReference type="FunCoup" id="Q0ZJ32">
    <property type="interactions" value="133"/>
</dbReference>
<dbReference type="STRING" id="29760.Q0ZJ32"/>
<dbReference type="GeneID" id="4025095"/>
<dbReference type="KEGG" id="vvi:4025095"/>
<dbReference type="InParanoid" id="Q0ZJ32"/>
<dbReference type="OrthoDB" id="157137at71240"/>
<dbReference type="Proteomes" id="UP000009183">
    <property type="component" value="Chloroplast"/>
</dbReference>
<dbReference type="GO" id="GO:0009535">
    <property type="term" value="C:chloroplast thylakoid membrane"/>
    <property type="evidence" value="ECO:0007669"/>
    <property type="project" value="UniProtKB-SubCell"/>
</dbReference>
<dbReference type="GO" id="GO:0005886">
    <property type="term" value="C:plasma membrane"/>
    <property type="evidence" value="ECO:0007669"/>
    <property type="project" value="UniProtKB-UniRule"/>
</dbReference>
<dbReference type="GO" id="GO:0045259">
    <property type="term" value="C:proton-transporting ATP synthase complex"/>
    <property type="evidence" value="ECO:0007669"/>
    <property type="project" value="UniProtKB-KW"/>
</dbReference>
<dbReference type="GO" id="GO:0046933">
    <property type="term" value="F:proton-transporting ATP synthase activity, rotational mechanism"/>
    <property type="evidence" value="ECO:0007669"/>
    <property type="project" value="UniProtKB-UniRule"/>
</dbReference>
<dbReference type="CDD" id="cd00310">
    <property type="entry name" value="ATP-synt_Fo_a_6"/>
    <property type="match status" value="1"/>
</dbReference>
<dbReference type="FunFam" id="1.20.120.220:FF:000001">
    <property type="entry name" value="ATP synthase subunit a, chloroplastic"/>
    <property type="match status" value="1"/>
</dbReference>
<dbReference type="Gene3D" id="1.20.120.220">
    <property type="entry name" value="ATP synthase, F0 complex, subunit A"/>
    <property type="match status" value="1"/>
</dbReference>
<dbReference type="HAMAP" id="MF_01393">
    <property type="entry name" value="ATP_synth_a_bact"/>
    <property type="match status" value="1"/>
</dbReference>
<dbReference type="InterPro" id="IPR045082">
    <property type="entry name" value="ATP_syn_F0_a_bact/chloroplast"/>
</dbReference>
<dbReference type="InterPro" id="IPR000568">
    <property type="entry name" value="ATP_synth_F0_asu"/>
</dbReference>
<dbReference type="InterPro" id="IPR023011">
    <property type="entry name" value="ATP_synth_F0_asu_AS"/>
</dbReference>
<dbReference type="InterPro" id="IPR035908">
    <property type="entry name" value="F0_ATP_A_sf"/>
</dbReference>
<dbReference type="NCBIfam" id="TIGR01131">
    <property type="entry name" value="ATP_synt_6_or_A"/>
    <property type="match status" value="1"/>
</dbReference>
<dbReference type="PANTHER" id="PTHR42823">
    <property type="entry name" value="ATP SYNTHASE SUBUNIT A, CHLOROPLASTIC"/>
    <property type="match status" value="1"/>
</dbReference>
<dbReference type="PANTHER" id="PTHR42823:SF3">
    <property type="entry name" value="ATP SYNTHASE SUBUNIT A, CHLOROPLASTIC"/>
    <property type="match status" value="1"/>
</dbReference>
<dbReference type="Pfam" id="PF00119">
    <property type="entry name" value="ATP-synt_A"/>
    <property type="match status" value="1"/>
</dbReference>
<dbReference type="PRINTS" id="PR00123">
    <property type="entry name" value="ATPASEA"/>
</dbReference>
<dbReference type="SUPFAM" id="SSF81336">
    <property type="entry name" value="F1F0 ATP synthase subunit A"/>
    <property type="match status" value="1"/>
</dbReference>
<dbReference type="PROSITE" id="PS00449">
    <property type="entry name" value="ATPASE_A"/>
    <property type="match status" value="1"/>
</dbReference>
<keyword id="KW-0066">ATP synthesis</keyword>
<keyword id="KW-0138">CF(0)</keyword>
<keyword id="KW-0150">Chloroplast</keyword>
<keyword id="KW-0375">Hydrogen ion transport</keyword>
<keyword id="KW-0406">Ion transport</keyword>
<keyword id="KW-0472">Membrane</keyword>
<keyword id="KW-0934">Plastid</keyword>
<keyword id="KW-1185">Reference proteome</keyword>
<keyword id="KW-0793">Thylakoid</keyword>
<keyword id="KW-0812">Transmembrane</keyword>
<keyword id="KW-1133">Transmembrane helix</keyword>
<keyword id="KW-0813">Transport</keyword>
<protein>
    <recommendedName>
        <fullName evidence="1">ATP synthase subunit a, chloroplastic</fullName>
    </recommendedName>
    <alternativeName>
        <fullName evidence="1">ATP synthase F0 sector subunit a</fullName>
    </alternativeName>
    <alternativeName>
        <fullName evidence="1">F-ATPase subunit IV</fullName>
    </alternativeName>
</protein>